<protein>
    <recommendedName>
        <fullName evidence="1">ATP synthase subunit b'</fullName>
    </recommendedName>
    <alternativeName>
        <fullName evidence="1">ATP synthase F(0) sector subunit b'</fullName>
    </alternativeName>
    <alternativeName>
        <fullName evidence="1">ATPase subunit II</fullName>
    </alternativeName>
    <alternativeName>
        <fullName evidence="1">F-type ATPase subunit b'</fullName>
        <shortName evidence="1">F-ATPase subunit b'</shortName>
    </alternativeName>
</protein>
<sequence length="151" mass="16728">MTSLLLFGAGGLFDFDATLPLMALQVVLLTFILNALFFRPVGRVVEEREVYVTTSRAEAKQKLAEAEKLELELKEQLKSARIAAQQLIQEAEKDSEQLYREALAIANADANAAREKARREIDAQRDSALSQLKGDAEKLGDLIVNRLLAAK</sequence>
<proteinExistence type="inferred from homology"/>
<keyword id="KW-0066">ATP synthesis</keyword>
<keyword id="KW-0138">CF(0)</keyword>
<keyword id="KW-0375">Hydrogen ion transport</keyword>
<keyword id="KW-0406">Ion transport</keyword>
<keyword id="KW-0472">Membrane</keyword>
<keyword id="KW-1185">Reference proteome</keyword>
<keyword id="KW-0793">Thylakoid</keyword>
<keyword id="KW-0812">Transmembrane</keyword>
<keyword id="KW-1133">Transmembrane helix</keyword>
<keyword id="KW-0813">Transport</keyword>
<organism>
    <name type="scientific">Prochlorococcus marinus (strain MIT 9313)</name>
    <dbReference type="NCBI Taxonomy" id="74547"/>
    <lineage>
        <taxon>Bacteria</taxon>
        <taxon>Bacillati</taxon>
        <taxon>Cyanobacteriota</taxon>
        <taxon>Cyanophyceae</taxon>
        <taxon>Synechococcales</taxon>
        <taxon>Prochlorococcaceae</taxon>
        <taxon>Prochlorococcus</taxon>
    </lineage>
</organism>
<dbReference type="EMBL" id="BX548175">
    <property type="protein sequence ID" value="CAE21645.1"/>
    <property type="molecule type" value="Genomic_DNA"/>
</dbReference>
<dbReference type="RefSeq" id="WP_011130838.1">
    <property type="nucleotide sequence ID" value="NC_005071.1"/>
</dbReference>
<dbReference type="SMR" id="Q7V5S4"/>
<dbReference type="KEGG" id="pmt:PMT_1470"/>
<dbReference type="eggNOG" id="COG0711">
    <property type="taxonomic scope" value="Bacteria"/>
</dbReference>
<dbReference type="HOGENOM" id="CLU_079215_9_0_3"/>
<dbReference type="OrthoDB" id="426571at2"/>
<dbReference type="Proteomes" id="UP000001423">
    <property type="component" value="Chromosome"/>
</dbReference>
<dbReference type="GO" id="GO:0031676">
    <property type="term" value="C:plasma membrane-derived thylakoid membrane"/>
    <property type="evidence" value="ECO:0007669"/>
    <property type="project" value="UniProtKB-SubCell"/>
</dbReference>
<dbReference type="GO" id="GO:0045259">
    <property type="term" value="C:proton-transporting ATP synthase complex"/>
    <property type="evidence" value="ECO:0007669"/>
    <property type="project" value="UniProtKB-KW"/>
</dbReference>
<dbReference type="GO" id="GO:0046933">
    <property type="term" value="F:proton-transporting ATP synthase activity, rotational mechanism"/>
    <property type="evidence" value="ECO:0007669"/>
    <property type="project" value="UniProtKB-UniRule"/>
</dbReference>
<dbReference type="GO" id="GO:0046961">
    <property type="term" value="F:proton-transporting ATPase activity, rotational mechanism"/>
    <property type="evidence" value="ECO:0007669"/>
    <property type="project" value="TreeGrafter"/>
</dbReference>
<dbReference type="CDD" id="cd06503">
    <property type="entry name" value="ATP-synt_Fo_b"/>
    <property type="match status" value="1"/>
</dbReference>
<dbReference type="HAMAP" id="MF_01398">
    <property type="entry name" value="ATP_synth_b_bprime"/>
    <property type="match status" value="1"/>
</dbReference>
<dbReference type="HAMAP" id="MF_01399">
    <property type="entry name" value="ATP_synth_bprime"/>
    <property type="match status" value="1"/>
</dbReference>
<dbReference type="InterPro" id="IPR034679">
    <property type="entry name" value="ATP_synth_b"/>
</dbReference>
<dbReference type="InterPro" id="IPR028987">
    <property type="entry name" value="ATP_synth_B-like_membr_sf"/>
</dbReference>
<dbReference type="InterPro" id="IPR002146">
    <property type="entry name" value="ATP_synth_b/b'su_bac/chlpt"/>
</dbReference>
<dbReference type="InterPro" id="IPR050059">
    <property type="entry name" value="ATP_synthase_B_chain"/>
</dbReference>
<dbReference type="NCBIfam" id="NF005607">
    <property type="entry name" value="PRK07353.1"/>
    <property type="match status" value="1"/>
</dbReference>
<dbReference type="PANTHER" id="PTHR33445">
    <property type="entry name" value="ATP SYNTHASE SUBUNIT B', CHLOROPLASTIC"/>
    <property type="match status" value="1"/>
</dbReference>
<dbReference type="PANTHER" id="PTHR33445:SF2">
    <property type="entry name" value="ATP SYNTHASE SUBUNIT B', CHLOROPLASTIC"/>
    <property type="match status" value="1"/>
</dbReference>
<dbReference type="Pfam" id="PF00430">
    <property type="entry name" value="ATP-synt_B"/>
    <property type="match status" value="1"/>
</dbReference>
<dbReference type="SUPFAM" id="SSF81573">
    <property type="entry name" value="F1F0 ATP synthase subunit B, membrane domain"/>
    <property type="match status" value="1"/>
</dbReference>
<accession>Q7V5S4</accession>
<feature type="chain" id="PRO_5000096806" description="ATP synthase subunit b'">
    <location>
        <begin position="1"/>
        <end position="151"/>
    </location>
</feature>
<feature type="transmembrane region" description="Helical" evidence="1">
    <location>
        <begin position="18"/>
        <end position="38"/>
    </location>
</feature>
<comment type="function">
    <text evidence="1">F(1)F(0) ATP synthase produces ATP from ADP in the presence of a proton or sodium gradient. F-type ATPases consist of two structural domains, F(1) containing the extramembraneous catalytic core and F(0) containing the membrane proton channel, linked together by a central stalk and a peripheral stalk. During catalysis, ATP synthesis in the catalytic domain of F(1) is coupled via a rotary mechanism of the central stalk subunits to proton translocation.</text>
</comment>
<comment type="function">
    <text evidence="1">Component of the F(0) channel, it forms part of the peripheral stalk, linking F(1) to F(0). The b'-subunit is a diverged and duplicated form of b found in plants and photosynthetic bacteria.</text>
</comment>
<comment type="subunit">
    <text evidence="1">F-type ATPases have 2 components, F(1) - the catalytic core - and F(0) - the membrane proton channel. F(1) has five subunits: alpha(3), beta(3), gamma(1), delta(1), epsilon(1). F(0) has four main subunits: a(1), b(1), b'(1) and c(10-14). The alpha and beta chains form an alternating ring which encloses part of the gamma chain. F(1) is attached to F(0) by a central stalk formed by the gamma and epsilon chains, while a peripheral stalk is formed by the delta, b and b' chains.</text>
</comment>
<comment type="subcellular location">
    <subcellularLocation>
        <location evidence="1">Cellular thylakoid membrane</location>
        <topology evidence="1">Single-pass membrane protein</topology>
    </subcellularLocation>
</comment>
<comment type="similarity">
    <text evidence="1">Belongs to the ATPase B chain family.</text>
</comment>
<name>ATPF2_PROMM</name>
<reference key="1">
    <citation type="journal article" date="2003" name="Nature">
        <title>Genome divergence in two Prochlorococcus ecotypes reflects oceanic niche differentiation.</title>
        <authorList>
            <person name="Rocap G."/>
            <person name="Larimer F.W."/>
            <person name="Lamerdin J.E."/>
            <person name="Malfatti S."/>
            <person name="Chain P."/>
            <person name="Ahlgren N.A."/>
            <person name="Arellano A."/>
            <person name="Coleman M."/>
            <person name="Hauser L."/>
            <person name="Hess W.R."/>
            <person name="Johnson Z.I."/>
            <person name="Land M.L."/>
            <person name="Lindell D."/>
            <person name="Post A.F."/>
            <person name="Regala W."/>
            <person name="Shah M."/>
            <person name="Shaw S.L."/>
            <person name="Steglich C."/>
            <person name="Sullivan M.B."/>
            <person name="Ting C.S."/>
            <person name="Tolonen A."/>
            <person name="Webb E.A."/>
            <person name="Zinser E.R."/>
            <person name="Chisholm S.W."/>
        </authorList>
    </citation>
    <scope>NUCLEOTIDE SEQUENCE [LARGE SCALE GENOMIC DNA]</scope>
    <source>
        <strain>MIT 9313</strain>
    </source>
</reference>
<evidence type="ECO:0000255" key="1">
    <source>
        <dbReference type="HAMAP-Rule" id="MF_01399"/>
    </source>
</evidence>
<gene>
    <name evidence="1" type="primary">atpF2</name>
    <name evidence="1" type="synonym">atpG</name>
    <name type="ordered locus">PMT_1470</name>
</gene>